<name>RL10_BACAA</name>
<comment type="function">
    <text evidence="1">Forms part of the ribosomal stalk, playing a central role in the interaction of the ribosome with GTP-bound translation factors.</text>
</comment>
<comment type="subunit">
    <text evidence="1">Part of the ribosomal stalk of the 50S ribosomal subunit. The N-terminus interacts with L11 and the large rRNA to form the base of the stalk. The C-terminus forms an elongated spine to which L12 dimers bind in a sequential fashion forming a multimeric L10(L12)X complex.</text>
</comment>
<comment type="similarity">
    <text evidence="1">Belongs to the universal ribosomal protein uL10 family.</text>
</comment>
<sequence length="166" mass="18037">MSKVIETKQQVVTEIADKLRASKSTIVVDYRGLTVSEATELRKQLREAGVEFKVYKNSLTRRAAESAEMAELNEFLTGPNAIAFSNEDVVAPAKVLNDFAKDHEALEIKAGVIEGKLVTLDEVKAIATLPSREGLLSMLLSVLQAPIRNLALATKAVADQKEEQGA</sequence>
<protein>
    <recommendedName>
        <fullName evidence="1">Large ribosomal subunit protein uL10</fullName>
    </recommendedName>
    <alternativeName>
        <fullName evidence="2">50S ribosomal protein L10</fullName>
    </alternativeName>
</protein>
<organism>
    <name type="scientific">Bacillus anthracis (strain A0248)</name>
    <dbReference type="NCBI Taxonomy" id="592021"/>
    <lineage>
        <taxon>Bacteria</taxon>
        <taxon>Bacillati</taxon>
        <taxon>Bacillota</taxon>
        <taxon>Bacilli</taxon>
        <taxon>Bacillales</taxon>
        <taxon>Bacillaceae</taxon>
        <taxon>Bacillus</taxon>
        <taxon>Bacillus cereus group</taxon>
    </lineage>
</organism>
<dbReference type="EMBL" id="CP001598">
    <property type="protein sequence ID" value="ACQ48112.1"/>
    <property type="molecule type" value="Genomic_DNA"/>
</dbReference>
<dbReference type="RefSeq" id="WP_000048716.1">
    <property type="nucleotide sequence ID" value="NC_012659.1"/>
</dbReference>
<dbReference type="SMR" id="C3P9P4"/>
<dbReference type="GeneID" id="93010954"/>
<dbReference type="KEGG" id="bai:BAA_0115"/>
<dbReference type="HOGENOM" id="CLU_092227_2_0_9"/>
<dbReference type="GO" id="GO:0015934">
    <property type="term" value="C:large ribosomal subunit"/>
    <property type="evidence" value="ECO:0007669"/>
    <property type="project" value="InterPro"/>
</dbReference>
<dbReference type="GO" id="GO:0070180">
    <property type="term" value="F:large ribosomal subunit rRNA binding"/>
    <property type="evidence" value="ECO:0007669"/>
    <property type="project" value="UniProtKB-UniRule"/>
</dbReference>
<dbReference type="GO" id="GO:0003735">
    <property type="term" value="F:structural constituent of ribosome"/>
    <property type="evidence" value="ECO:0007669"/>
    <property type="project" value="InterPro"/>
</dbReference>
<dbReference type="GO" id="GO:0006412">
    <property type="term" value="P:translation"/>
    <property type="evidence" value="ECO:0007669"/>
    <property type="project" value="UniProtKB-UniRule"/>
</dbReference>
<dbReference type="CDD" id="cd05797">
    <property type="entry name" value="Ribosomal_L10"/>
    <property type="match status" value="1"/>
</dbReference>
<dbReference type="FunFam" id="3.30.70.1730:FF:000001">
    <property type="entry name" value="50S ribosomal protein L10"/>
    <property type="match status" value="1"/>
</dbReference>
<dbReference type="Gene3D" id="3.30.70.1730">
    <property type="match status" value="1"/>
</dbReference>
<dbReference type="Gene3D" id="6.10.250.290">
    <property type="match status" value="1"/>
</dbReference>
<dbReference type="HAMAP" id="MF_00362">
    <property type="entry name" value="Ribosomal_uL10"/>
    <property type="match status" value="1"/>
</dbReference>
<dbReference type="InterPro" id="IPR001790">
    <property type="entry name" value="Ribosomal_uL10"/>
</dbReference>
<dbReference type="InterPro" id="IPR043141">
    <property type="entry name" value="Ribosomal_uL10-like_sf"/>
</dbReference>
<dbReference type="InterPro" id="IPR022973">
    <property type="entry name" value="Ribosomal_uL10_bac"/>
</dbReference>
<dbReference type="InterPro" id="IPR047865">
    <property type="entry name" value="Ribosomal_uL10_bac_type"/>
</dbReference>
<dbReference type="InterPro" id="IPR002363">
    <property type="entry name" value="Ribosomal_uL10_CS_bac"/>
</dbReference>
<dbReference type="NCBIfam" id="NF000955">
    <property type="entry name" value="PRK00099.1-1"/>
    <property type="match status" value="1"/>
</dbReference>
<dbReference type="PANTHER" id="PTHR11560">
    <property type="entry name" value="39S RIBOSOMAL PROTEIN L10, MITOCHONDRIAL"/>
    <property type="match status" value="1"/>
</dbReference>
<dbReference type="Pfam" id="PF00466">
    <property type="entry name" value="Ribosomal_L10"/>
    <property type="match status" value="1"/>
</dbReference>
<dbReference type="SUPFAM" id="SSF160369">
    <property type="entry name" value="Ribosomal protein L10-like"/>
    <property type="match status" value="1"/>
</dbReference>
<dbReference type="PROSITE" id="PS01109">
    <property type="entry name" value="RIBOSOMAL_L10"/>
    <property type="match status" value="1"/>
</dbReference>
<proteinExistence type="inferred from homology"/>
<gene>
    <name evidence="1" type="primary">rplJ</name>
    <name type="ordered locus">BAA_0115</name>
</gene>
<accession>C3P9P4</accession>
<evidence type="ECO:0000255" key="1">
    <source>
        <dbReference type="HAMAP-Rule" id="MF_00362"/>
    </source>
</evidence>
<evidence type="ECO:0000305" key="2"/>
<feature type="chain" id="PRO_1000195524" description="Large ribosomal subunit protein uL10">
    <location>
        <begin position="1"/>
        <end position="166"/>
    </location>
</feature>
<keyword id="KW-0687">Ribonucleoprotein</keyword>
<keyword id="KW-0689">Ribosomal protein</keyword>
<keyword id="KW-0694">RNA-binding</keyword>
<keyword id="KW-0699">rRNA-binding</keyword>
<reference key="1">
    <citation type="submission" date="2009-04" db="EMBL/GenBank/DDBJ databases">
        <title>Genome sequence of Bacillus anthracis A0248.</title>
        <authorList>
            <person name="Dodson R.J."/>
            <person name="Munk A.C."/>
            <person name="Bruce D."/>
            <person name="Detter C."/>
            <person name="Tapia R."/>
            <person name="Sutton G."/>
            <person name="Sims D."/>
            <person name="Brettin T."/>
        </authorList>
    </citation>
    <scope>NUCLEOTIDE SEQUENCE [LARGE SCALE GENOMIC DNA]</scope>
    <source>
        <strain>A0248</strain>
    </source>
</reference>